<sequence length="378" mass="42923">MKHSVHFGAGNIGRGFIGEILFKNGFHIDFVDVNNQIIHALNEKGKYEIEIAQKGQSRIEVTNVAGINSKEHPEQVIEAIQKTDIITTAIGPNILPFIAELLAKGIEARRVAGNTQALDVMACENMIGGSQFLYQEVKKYLSPEGLTFADNYIGFPNAAVDRIVPAQSHEDSLFVVVEPFNEWVVETKRLKNPDLRLEDVHYEEDLEPFIERKLFSVNSGHATSAYIGAHYGAKTILEALQNPNIKSRIESVLAEIRSLLIAKWNFDKKELENYHKVIIERFENPFIVDEVSRVARTPIRKLGYNERFIRPIRELKELSLSYKNLLKTVGYAFDYRDVNDEESIRLGELLAIQSVKDVVIQVTGLDDQELIEQIVEYI</sequence>
<evidence type="ECO:0000255" key="1">
    <source>
        <dbReference type="HAMAP-Rule" id="MF_00196"/>
    </source>
</evidence>
<protein>
    <recommendedName>
        <fullName evidence="1">Mannitol-1-phosphate 5-dehydrogenase</fullName>
        <ecNumber evidence="1">1.1.1.17</ecNumber>
    </recommendedName>
</protein>
<organism>
    <name type="scientific">Streptococcus pneumoniae (strain Hungary19A-6)</name>
    <dbReference type="NCBI Taxonomy" id="487214"/>
    <lineage>
        <taxon>Bacteria</taxon>
        <taxon>Bacillati</taxon>
        <taxon>Bacillota</taxon>
        <taxon>Bacilli</taxon>
        <taxon>Lactobacillales</taxon>
        <taxon>Streptococcaceae</taxon>
        <taxon>Streptococcus</taxon>
    </lineage>
</organism>
<comment type="catalytic activity">
    <reaction evidence="1">
        <text>D-mannitol 1-phosphate + NAD(+) = beta-D-fructose 6-phosphate + NADH + H(+)</text>
        <dbReference type="Rhea" id="RHEA:19661"/>
        <dbReference type="ChEBI" id="CHEBI:15378"/>
        <dbReference type="ChEBI" id="CHEBI:57540"/>
        <dbReference type="ChEBI" id="CHEBI:57634"/>
        <dbReference type="ChEBI" id="CHEBI:57945"/>
        <dbReference type="ChEBI" id="CHEBI:61381"/>
        <dbReference type="EC" id="1.1.1.17"/>
    </reaction>
</comment>
<comment type="similarity">
    <text evidence="1">Belongs to the mannitol dehydrogenase family.</text>
</comment>
<gene>
    <name evidence="1" type="primary">mtlD</name>
    <name type="ordered locus">SPH_0507</name>
</gene>
<keyword id="KW-0520">NAD</keyword>
<keyword id="KW-0560">Oxidoreductase</keyword>
<reference key="1">
    <citation type="journal article" date="2010" name="Genome Biol.">
        <title>Structure and dynamics of the pan-genome of Streptococcus pneumoniae and closely related species.</title>
        <authorList>
            <person name="Donati C."/>
            <person name="Hiller N.L."/>
            <person name="Tettelin H."/>
            <person name="Muzzi A."/>
            <person name="Croucher N.J."/>
            <person name="Angiuoli S.V."/>
            <person name="Oggioni M."/>
            <person name="Dunning Hotopp J.C."/>
            <person name="Hu F.Z."/>
            <person name="Riley D.R."/>
            <person name="Covacci A."/>
            <person name="Mitchell T.J."/>
            <person name="Bentley S.D."/>
            <person name="Kilian M."/>
            <person name="Ehrlich G.D."/>
            <person name="Rappuoli R."/>
            <person name="Moxon E.R."/>
            <person name="Masignani V."/>
        </authorList>
    </citation>
    <scope>NUCLEOTIDE SEQUENCE [LARGE SCALE GENOMIC DNA]</scope>
    <source>
        <strain>Hungary19A-6</strain>
    </source>
</reference>
<accession>B1I9J3</accession>
<proteinExistence type="inferred from homology"/>
<feature type="chain" id="PRO_1000099205" description="Mannitol-1-phosphate 5-dehydrogenase">
    <location>
        <begin position="1"/>
        <end position="378"/>
    </location>
</feature>
<feature type="binding site" evidence="1">
    <location>
        <begin position="4"/>
        <end position="15"/>
    </location>
    <ligand>
        <name>NAD(+)</name>
        <dbReference type="ChEBI" id="CHEBI:57540"/>
    </ligand>
</feature>
<dbReference type="EC" id="1.1.1.17" evidence="1"/>
<dbReference type="EMBL" id="CP000936">
    <property type="protein sequence ID" value="ACA36431.1"/>
    <property type="molecule type" value="Genomic_DNA"/>
</dbReference>
<dbReference type="RefSeq" id="WP_000682965.1">
    <property type="nucleotide sequence ID" value="NC_010380.1"/>
</dbReference>
<dbReference type="SMR" id="B1I9J3"/>
<dbReference type="KEGG" id="spv:SPH_0507"/>
<dbReference type="HOGENOM" id="CLU_036089_2_0_9"/>
<dbReference type="Proteomes" id="UP000002163">
    <property type="component" value="Chromosome"/>
</dbReference>
<dbReference type="GO" id="GO:0005829">
    <property type="term" value="C:cytosol"/>
    <property type="evidence" value="ECO:0007669"/>
    <property type="project" value="TreeGrafter"/>
</dbReference>
<dbReference type="GO" id="GO:0008926">
    <property type="term" value="F:mannitol-1-phosphate 5-dehydrogenase activity"/>
    <property type="evidence" value="ECO:0007669"/>
    <property type="project" value="UniProtKB-UniRule"/>
</dbReference>
<dbReference type="GO" id="GO:0019592">
    <property type="term" value="P:mannitol catabolic process"/>
    <property type="evidence" value="ECO:0007669"/>
    <property type="project" value="TreeGrafter"/>
</dbReference>
<dbReference type="FunFam" id="3.40.50.720:FF:000586">
    <property type="entry name" value="Mannitol-1-phosphate 5-dehydrogenase"/>
    <property type="match status" value="1"/>
</dbReference>
<dbReference type="Gene3D" id="1.10.1040.10">
    <property type="entry name" value="N-(1-d-carboxylethyl)-l-norvaline Dehydrogenase, domain 2"/>
    <property type="match status" value="1"/>
</dbReference>
<dbReference type="Gene3D" id="3.40.50.720">
    <property type="entry name" value="NAD(P)-binding Rossmann-like Domain"/>
    <property type="match status" value="1"/>
</dbReference>
<dbReference type="HAMAP" id="MF_00196">
    <property type="entry name" value="Mannitol_dehydrog"/>
    <property type="match status" value="1"/>
</dbReference>
<dbReference type="InterPro" id="IPR008927">
    <property type="entry name" value="6-PGluconate_DH-like_C_sf"/>
</dbReference>
<dbReference type="InterPro" id="IPR013328">
    <property type="entry name" value="6PGD_dom2"/>
</dbReference>
<dbReference type="InterPro" id="IPR023028">
    <property type="entry name" value="Mannitol_1_phos_5_DH"/>
</dbReference>
<dbReference type="InterPro" id="IPR000669">
    <property type="entry name" value="Mannitol_DH"/>
</dbReference>
<dbReference type="InterPro" id="IPR013118">
    <property type="entry name" value="Mannitol_DH_C"/>
</dbReference>
<dbReference type="InterPro" id="IPR023027">
    <property type="entry name" value="Mannitol_DH_CS"/>
</dbReference>
<dbReference type="InterPro" id="IPR013131">
    <property type="entry name" value="Mannitol_DH_N"/>
</dbReference>
<dbReference type="InterPro" id="IPR036291">
    <property type="entry name" value="NAD(P)-bd_dom_sf"/>
</dbReference>
<dbReference type="NCBIfam" id="NF002647">
    <property type="entry name" value="PRK02318.1-3"/>
    <property type="match status" value="1"/>
</dbReference>
<dbReference type="NCBIfam" id="NF002652">
    <property type="entry name" value="PRK02318.2-5"/>
    <property type="match status" value="1"/>
</dbReference>
<dbReference type="PANTHER" id="PTHR30524:SF0">
    <property type="entry name" value="ALTRONATE OXIDOREDUCTASE-RELATED"/>
    <property type="match status" value="1"/>
</dbReference>
<dbReference type="PANTHER" id="PTHR30524">
    <property type="entry name" value="MANNITOL-1-PHOSPHATE 5-DEHYDROGENASE"/>
    <property type="match status" value="1"/>
</dbReference>
<dbReference type="Pfam" id="PF01232">
    <property type="entry name" value="Mannitol_dh"/>
    <property type="match status" value="1"/>
</dbReference>
<dbReference type="Pfam" id="PF08125">
    <property type="entry name" value="Mannitol_dh_C"/>
    <property type="match status" value="1"/>
</dbReference>
<dbReference type="PRINTS" id="PR00084">
    <property type="entry name" value="MTLDHDRGNASE"/>
</dbReference>
<dbReference type="SUPFAM" id="SSF48179">
    <property type="entry name" value="6-phosphogluconate dehydrogenase C-terminal domain-like"/>
    <property type="match status" value="1"/>
</dbReference>
<dbReference type="SUPFAM" id="SSF51735">
    <property type="entry name" value="NAD(P)-binding Rossmann-fold domains"/>
    <property type="match status" value="1"/>
</dbReference>
<dbReference type="PROSITE" id="PS00974">
    <property type="entry name" value="MANNITOL_DHGENASE"/>
    <property type="match status" value="1"/>
</dbReference>
<name>MTLD_STRPI</name>